<dbReference type="EC" id="6.1.1.15" evidence="1"/>
<dbReference type="EMBL" id="AL035472">
    <property type="protein sequence ID" value="CAB36573.1"/>
    <property type="status" value="ALT_INIT"/>
    <property type="molecule type" value="Genomic_DNA"/>
</dbReference>
<dbReference type="EMBL" id="AL583922">
    <property type="protein sequence ID" value="CAC30504.1"/>
    <property type="molecule type" value="Genomic_DNA"/>
</dbReference>
<dbReference type="PIR" id="C87103">
    <property type="entry name" value="C87103"/>
</dbReference>
<dbReference type="RefSeq" id="NP_302079.1">
    <property type="nucleotide sequence ID" value="NC_002677.1"/>
</dbReference>
<dbReference type="RefSeq" id="WP_010908400.1">
    <property type="nucleotide sequence ID" value="NC_002677.1"/>
</dbReference>
<dbReference type="SMR" id="Q9Z5I7"/>
<dbReference type="STRING" id="272631.gene:17575394"/>
<dbReference type="KEGG" id="mle:proS"/>
<dbReference type="PATRIC" id="fig|272631.5.peg.2930"/>
<dbReference type="Leproma" id="ML1553"/>
<dbReference type="eggNOG" id="COG0442">
    <property type="taxonomic scope" value="Bacteria"/>
</dbReference>
<dbReference type="HOGENOM" id="CLU_001882_4_2_11"/>
<dbReference type="OrthoDB" id="9809052at2"/>
<dbReference type="Proteomes" id="UP000000806">
    <property type="component" value="Chromosome"/>
</dbReference>
<dbReference type="GO" id="GO:0017101">
    <property type="term" value="C:aminoacyl-tRNA synthetase multienzyme complex"/>
    <property type="evidence" value="ECO:0007669"/>
    <property type="project" value="TreeGrafter"/>
</dbReference>
<dbReference type="GO" id="GO:0005737">
    <property type="term" value="C:cytoplasm"/>
    <property type="evidence" value="ECO:0007669"/>
    <property type="project" value="UniProtKB-SubCell"/>
</dbReference>
<dbReference type="GO" id="GO:0005524">
    <property type="term" value="F:ATP binding"/>
    <property type="evidence" value="ECO:0007669"/>
    <property type="project" value="UniProtKB-UniRule"/>
</dbReference>
<dbReference type="GO" id="GO:0004827">
    <property type="term" value="F:proline-tRNA ligase activity"/>
    <property type="evidence" value="ECO:0007669"/>
    <property type="project" value="UniProtKB-UniRule"/>
</dbReference>
<dbReference type="GO" id="GO:0006433">
    <property type="term" value="P:prolyl-tRNA aminoacylation"/>
    <property type="evidence" value="ECO:0007669"/>
    <property type="project" value="UniProtKB-UniRule"/>
</dbReference>
<dbReference type="CDD" id="cd00862">
    <property type="entry name" value="ProRS_anticodon_zinc"/>
    <property type="match status" value="1"/>
</dbReference>
<dbReference type="CDD" id="cd00778">
    <property type="entry name" value="ProRS_core_arch_euk"/>
    <property type="match status" value="1"/>
</dbReference>
<dbReference type="FunFam" id="3.40.50.800:FF:000005">
    <property type="entry name" value="bifunctional glutamate/proline--tRNA ligase"/>
    <property type="match status" value="1"/>
</dbReference>
<dbReference type="FunFam" id="3.30.930.10:FF:000037">
    <property type="entry name" value="Proline--tRNA ligase"/>
    <property type="match status" value="1"/>
</dbReference>
<dbReference type="Gene3D" id="3.40.50.800">
    <property type="entry name" value="Anticodon-binding domain"/>
    <property type="match status" value="1"/>
</dbReference>
<dbReference type="Gene3D" id="3.30.930.10">
    <property type="entry name" value="Bira Bifunctional Protein, Domain 2"/>
    <property type="match status" value="1"/>
</dbReference>
<dbReference type="Gene3D" id="3.30.110.30">
    <property type="entry name" value="C-terminal domain of ProRS"/>
    <property type="match status" value="1"/>
</dbReference>
<dbReference type="HAMAP" id="MF_01571">
    <property type="entry name" value="Pro_tRNA_synth_type3"/>
    <property type="match status" value="1"/>
</dbReference>
<dbReference type="InterPro" id="IPR002314">
    <property type="entry name" value="aa-tRNA-synt_IIb"/>
</dbReference>
<dbReference type="InterPro" id="IPR006195">
    <property type="entry name" value="aa-tRNA-synth_II"/>
</dbReference>
<dbReference type="InterPro" id="IPR045864">
    <property type="entry name" value="aa-tRNA-synth_II/BPL/LPL"/>
</dbReference>
<dbReference type="InterPro" id="IPR004154">
    <property type="entry name" value="Anticodon-bd"/>
</dbReference>
<dbReference type="InterPro" id="IPR036621">
    <property type="entry name" value="Anticodon-bd_dom_sf"/>
</dbReference>
<dbReference type="InterPro" id="IPR002316">
    <property type="entry name" value="Pro-tRNA-ligase_IIa"/>
</dbReference>
<dbReference type="InterPro" id="IPR004499">
    <property type="entry name" value="Pro-tRNA-ligase_IIa_arc-type"/>
</dbReference>
<dbReference type="InterPro" id="IPR016061">
    <property type="entry name" value="Pro-tRNA_ligase_II_C"/>
</dbReference>
<dbReference type="InterPro" id="IPR017449">
    <property type="entry name" value="Pro-tRNA_synth_II"/>
</dbReference>
<dbReference type="InterPro" id="IPR033721">
    <property type="entry name" value="ProRS_core_arch_euk"/>
</dbReference>
<dbReference type="NCBIfam" id="TIGR00408">
    <property type="entry name" value="proS_fam_I"/>
    <property type="match status" value="1"/>
</dbReference>
<dbReference type="PANTHER" id="PTHR43382:SF2">
    <property type="entry name" value="BIFUNCTIONAL GLUTAMATE_PROLINE--TRNA LIGASE"/>
    <property type="match status" value="1"/>
</dbReference>
<dbReference type="PANTHER" id="PTHR43382">
    <property type="entry name" value="PROLYL-TRNA SYNTHETASE"/>
    <property type="match status" value="1"/>
</dbReference>
<dbReference type="Pfam" id="PF03129">
    <property type="entry name" value="HGTP_anticodon"/>
    <property type="match status" value="1"/>
</dbReference>
<dbReference type="Pfam" id="PF09180">
    <property type="entry name" value="ProRS-C_1"/>
    <property type="match status" value="1"/>
</dbReference>
<dbReference type="Pfam" id="PF00587">
    <property type="entry name" value="tRNA-synt_2b"/>
    <property type="match status" value="1"/>
</dbReference>
<dbReference type="PRINTS" id="PR01046">
    <property type="entry name" value="TRNASYNTHPRO"/>
</dbReference>
<dbReference type="SMART" id="SM00946">
    <property type="entry name" value="ProRS-C_1"/>
    <property type="match status" value="1"/>
</dbReference>
<dbReference type="SUPFAM" id="SSF64586">
    <property type="entry name" value="C-terminal domain of ProRS"/>
    <property type="match status" value="1"/>
</dbReference>
<dbReference type="SUPFAM" id="SSF52954">
    <property type="entry name" value="Class II aaRS ABD-related"/>
    <property type="match status" value="1"/>
</dbReference>
<dbReference type="SUPFAM" id="SSF55681">
    <property type="entry name" value="Class II aaRS and biotin synthetases"/>
    <property type="match status" value="1"/>
</dbReference>
<dbReference type="PROSITE" id="PS50862">
    <property type="entry name" value="AA_TRNA_LIGASE_II"/>
    <property type="match status" value="1"/>
</dbReference>
<accession>Q9Z5I7</accession>
<accession>Q9CBV1</accession>
<gene>
    <name evidence="1" type="primary">proS</name>
    <name type="ordered locus">ML1553</name>
    <name type="ORF">MLCB596.17c</name>
</gene>
<name>SYP_MYCLE</name>
<comment type="function">
    <text evidence="1">Catalyzes the attachment of proline to tRNA(Pro) in a two-step reaction: proline is first activated by ATP to form Pro-AMP and then transferred to the acceptor end of tRNA(Pro).</text>
</comment>
<comment type="catalytic activity">
    <reaction evidence="1">
        <text>tRNA(Pro) + L-proline + ATP = L-prolyl-tRNA(Pro) + AMP + diphosphate</text>
        <dbReference type="Rhea" id="RHEA:14305"/>
        <dbReference type="Rhea" id="RHEA-COMP:9700"/>
        <dbReference type="Rhea" id="RHEA-COMP:9702"/>
        <dbReference type="ChEBI" id="CHEBI:30616"/>
        <dbReference type="ChEBI" id="CHEBI:33019"/>
        <dbReference type="ChEBI" id="CHEBI:60039"/>
        <dbReference type="ChEBI" id="CHEBI:78442"/>
        <dbReference type="ChEBI" id="CHEBI:78532"/>
        <dbReference type="ChEBI" id="CHEBI:456215"/>
        <dbReference type="EC" id="6.1.1.15"/>
    </reaction>
</comment>
<comment type="subunit">
    <text evidence="1">Homodimer.</text>
</comment>
<comment type="subcellular location">
    <subcellularLocation>
        <location evidence="1">Cytoplasm</location>
    </subcellularLocation>
</comment>
<comment type="domain">
    <text evidence="1">Consists of three domains: the N-terminal catalytic domain, the anticodon-binding domain and the C-terminal extension.</text>
</comment>
<comment type="similarity">
    <text evidence="1">Belongs to the class-II aminoacyl-tRNA synthetase family. ProS type 3 subfamily.</text>
</comment>
<comment type="sequence caution" evidence="2">
    <conflict type="erroneous initiation">
        <sequence resource="EMBL-CDS" id="CAB36573"/>
    </conflict>
</comment>
<keyword id="KW-0030">Aminoacyl-tRNA synthetase</keyword>
<keyword id="KW-0067">ATP-binding</keyword>
<keyword id="KW-0963">Cytoplasm</keyword>
<keyword id="KW-0436">Ligase</keyword>
<keyword id="KW-0547">Nucleotide-binding</keyword>
<keyword id="KW-0648">Protein biosynthesis</keyword>
<keyword id="KW-1185">Reference proteome</keyword>
<evidence type="ECO:0000255" key="1">
    <source>
        <dbReference type="HAMAP-Rule" id="MF_01571"/>
    </source>
</evidence>
<evidence type="ECO:0000305" key="2"/>
<proteinExistence type="inferred from homology"/>
<reference key="1">
    <citation type="journal article" date="2001" name="Nature">
        <title>Massive gene decay in the leprosy bacillus.</title>
        <authorList>
            <person name="Cole S.T."/>
            <person name="Eiglmeier K."/>
            <person name="Parkhill J."/>
            <person name="James K.D."/>
            <person name="Thomson N.R."/>
            <person name="Wheeler P.R."/>
            <person name="Honore N."/>
            <person name="Garnier T."/>
            <person name="Churcher C.M."/>
            <person name="Harris D.E."/>
            <person name="Mungall K.L."/>
            <person name="Basham D."/>
            <person name="Brown D."/>
            <person name="Chillingworth T."/>
            <person name="Connor R."/>
            <person name="Davies R.M."/>
            <person name="Devlin K."/>
            <person name="Duthoy S."/>
            <person name="Feltwell T."/>
            <person name="Fraser A."/>
            <person name="Hamlin N."/>
            <person name="Holroyd S."/>
            <person name="Hornsby T."/>
            <person name="Jagels K."/>
            <person name="Lacroix C."/>
            <person name="Maclean J."/>
            <person name="Moule S."/>
            <person name="Murphy L.D."/>
            <person name="Oliver K."/>
            <person name="Quail M.A."/>
            <person name="Rajandream M.A."/>
            <person name="Rutherford K.M."/>
            <person name="Rutter S."/>
            <person name="Seeger K."/>
            <person name="Simon S."/>
            <person name="Simmonds M."/>
            <person name="Skelton J."/>
            <person name="Squares R."/>
            <person name="Squares S."/>
            <person name="Stevens K."/>
            <person name="Taylor K."/>
            <person name="Whitehead S."/>
            <person name="Woodward J.R."/>
            <person name="Barrell B.G."/>
        </authorList>
    </citation>
    <scope>NUCLEOTIDE SEQUENCE [LARGE SCALE GENOMIC DNA]</scope>
    <source>
        <strain>TN</strain>
    </source>
</reference>
<organism>
    <name type="scientific">Mycobacterium leprae (strain TN)</name>
    <dbReference type="NCBI Taxonomy" id="272631"/>
    <lineage>
        <taxon>Bacteria</taxon>
        <taxon>Bacillati</taxon>
        <taxon>Actinomycetota</taxon>
        <taxon>Actinomycetes</taxon>
        <taxon>Mycobacteriales</taxon>
        <taxon>Mycobacteriaceae</taxon>
        <taxon>Mycobacterium</taxon>
    </lineage>
</organism>
<feature type="chain" id="PRO_0000139334" description="Proline--tRNA ligase">
    <location>
        <begin position="1"/>
        <end position="480"/>
    </location>
</feature>
<protein>
    <recommendedName>
        <fullName evidence="1">Proline--tRNA ligase</fullName>
        <ecNumber evidence="1">6.1.1.15</ecNumber>
    </recommendedName>
    <alternativeName>
        <fullName evidence="1">Prolyl-tRNA synthetase</fullName>
        <shortName evidence="1">ProRS</shortName>
    </alternativeName>
</protein>
<sequence length="480" mass="53585">MGCNKRGVTRQEDDFSAWYNEVVAKAGLIDRGPAKGTMVIRPYGYRIWELLQDELDSKIKELGHENAYFPMLIPENYFNREAEHVEGFHPELAVVTHAGGKELSEPLVIRPTSETVIGDMMAKWITSHRDLPLRLNQWSNVVRWELRPRMLLRTIEFLWQEGHSAHIEKSDALRETLFALDIYTTLARDMAAIPIVSGEKTAGERFAGALNTYTIEAMMRDGKALQSATTHYLGDNFARAFNIRYTTAEEQQAFVHTTSFGLSTRMIGAIVMVHGDDKGLVLPPQVAPYQVVIVPITTGNKASEVGHAAADLARRLQAAGVRTHVDARPQLTPGWKYNEWELRGVPIRLELGPRDLEAGTTVMVRRIGEKAKQPIAIAAAPTELPGILEEFQRTLLERATQFRDDHTTLVDNWDAFATTVATGWALAIHCGNPECEEDIKAETAATPRCVPRQGAPATGRCIRCDAPSAYDKRVIFARAY</sequence>